<gene>
    <name evidence="10" type="primary">ARSL</name>
    <name type="synonym">ARSE</name>
</gene>
<comment type="function">
    <text evidence="5 7">Exhibits arylsulfatase activity towards the artificial substrate 4-methylumbelliferyl sulfate (PubMed:7720070, PubMed:9497243). May be essential for the correct composition of cartilage and bone matrix during development (PubMed:7720070). Has no activity toward steroid sulfates (PubMed:7720070).</text>
</comment>
<comment type="catalytic activity">
    <reaction evidence="5 7">
        <text>an aryl sulfate + H2O = a phenol + sulfate + H(+)</text>
        <dbReference type="Rhea" id="RHEA:17261"/>
        <dbReference type="ChEBI" id="CHEBI:15377"/>
        <dbReference type="ChEBI" id="CHEBI:15378"/>
        <dbReference type="ChEBI" id="CHEBI:16189"/>
        <dbReference type="ChEBI" id="CHEBI:33853"/>
        <dbReference type="ChEBI" id="CHEBI:140317"/>
        <dbReference type="EC" id="3.1.6.1"/>
    </reaction>
</comment>
<comment type="cofactor">
    <cofactor evidence="1">
        <name>Ca(2+)</name>
        <dbReference type="ChEBI" id="CHEBI:29108"/>
    </cofactor>
    <text evidence="1">Binds 1 Ca(2+) ion per subunit.</text>
</comment>
<comment type="activity regulation">
    <text evidence="5">Inhibited by millimolar concentrations of warfarin.</text>
</comment>
<comment type="biophysicochemical properties">
    <phDependence>
        <text evidence="5">Optimum pH is 7.</text>
    </phDependence>
    <temperatureDependence>
        <text evidence="5">Almost completely inactivated after 10 minutes at 50 degrees Celsius.</text>
    </temperatureDependence>
</comment>
<comment type="subcellular location">
    <subcellularLocation>
        <location evidence="7">Golgi apparatus</location>
        <location evidence="7">Golgi stack</location>
    </subcellularLocation>
</comment>
<comment type="tissue specificity">
    <text evidence="5">Expressed in the pancreas, liver and kidney.</text>
</comment>
<comment type="PTM">
    <text evidence="4">N-glycosylated.</text>
</comment>
<comment type="PTM">
    <text evidence="1">The conversion to 3-oxoalanine (also known as C-formylglycine, FGly), of a serine or cysteine residue in prokaryotes and of a cysteine residue in eukaryotes, is critical for catalytic activity.</text>
</comment>
<comment type="disease" evidence="3 5 6 7">
    <disease id="DI-00302">
        <name>Chondrodysplasia punctata 1, X-linked recessive</name>
        <acronym>CDPX1</acronym>
        <description>A clinically and genetically heterogeneous disorder characterized by punctiform calcification of the bones. CDPX1 is a congenital defect of bone and cartilage development characterized by aberrant bone mineralization, severe underdevelopment of nasal cartilage, and distal phalangeal hypoplasia. This disease can also be induced by inhibition with the drug warfarin.</description>
        <dbReference type="MIM" id="302950"/>
    </disease>
    <text>The disease is caused by variants affecting the gene represented in this entry.</text>
</comment>
<comment type="similarity">
    <text evidence="9">Belongs to the sulfatase family.</text>
</comment>
<sequence>MLHLHHSCLCFRSWLPAMLAVLLSLAPSASSDISASRPNILLLMADDLGIGDIGCYGNNTMRTPNIDRLAEDGVKLTQHISAASLCTPSRAAFLTGRYPVRSGMVSSIGYRVLQWTGASGGLPTNETTFAKILKEKGYATGLIGKWHLGLNCESASDHCHHPLHHGFDHFYGMPFSLMGDCARWELSEKRVNLEQKLNFLFQVLALVALTLVAGKLTHLIPVSWMPVIWSALSAVLLLASSYFVGALIVHADCFLMRNHTITEQPMCFQRTTPLILQEVASFLKRNKHGPFLLFVSFLHVHIPLITMENFLGKSLHGLYGDNVEEMDWMVGRILDTLDVEGLSNSTLIYFTSDHGGSLENQLGNTQYGGWNGIYKGGKGMGGWEGGIRVPGIFRWPGVLPAGRVIGEPTSLMDVFPTVVRLAGGEVPQDRVIDGQDLLPLLLGTAQHSDHEFLMHYCERFLHAARWHQRDRGTMWKVHFVTPVFQPEGAGACYGRKVCPCFGEKVVHHDPPLLFDLSRDPSETHILTPASEPVFYQVMERVQQAVWEHQRTLSPVPLQLDRLGNIWRPWLQPCCGPFPLCWCLREDDPQ</sequence>
<name>ARSL_HUMAN</name>
<accession>P51690</accession>
<accession>Q53FT2</accession>
<accession>Q53FU8</accession>
<organism>
    <name type="scientific">Homo sapiens</name>
    <name type="common">Human</name>
    <dbReference type="NCBI Taxonomy" id="9606"/>
    <lineage>
        <taxon>Eukaryota</taxon>
        <taxon>Metazoa</taxon>
        <taxon>Chordata</taxon>
        <taxon>Craniata</taxon>
        <taxon>Vertebrata</taxon>
        <taxon>Euteleostomi</taxon>
        <taxon>Mammalia</taxon>
        <taxon>Eutheria</taxon>
        <taxon>Euarchontoglires</taxon>
        <taxon>Primates</taxon>
        <taxon>Haplorrhini</taxon>
        <taxon>Catarrhini</taxon>
        <taxon>Hominidae</taxon>
        <taxon>Homo</taxon>
    </lineage>
</organism>
<keyword id="KW-0106">Calcium</keyword>
<keyword id="KW-0225">Disease variant</keyword>
<keyword id="KW-0325">Glycoprotein</keyword>
<keyword id="KW-0333">Golgi apparatus</keyword>
<keyword id="KW-0378">Hydrolase</keyword>
<keyword id="KW-0479">Metal-binding</keyword>
<keyword id="KW-1267">Proteomics identification</keyword>
<keyword id="KW-1185">Reference proteome</keyword>
<keyword id="KW-0732">Signal</keyword>
<reference key="1">
    <citation type="journal article" date="1995" name="Cell">
        <title>A cluster of sulfatase genes on Xp22.3: mutations in chondrodysplasia punctata (CDPX) and implications for warfarin embryopathy.</title>
        <authorList>
            <person name="Franco B."/>
            <person name="Meroni G."/>
            <person name="Parenti G."/>
            <person name="Levilliers J."/>
            <person name="Bernard L."/>
            <person name="Gebbia M."/>
            <person name="Cox L."/>
            <person name="Maroteaux P."/>
            <person name="Sheffield L."/>
            <person name="Rappold G.A."/>
            <person name="Andria G."/>
            <person name="Petit C."/>
            <person name="Ballabio A."/>
        </authorList>
    </citation>
    <scope>NUCLEOTIDE SEQUENCE [MRNA]</scope>
    <scope>VARIANTS CDPX1 SER-12; PRO-111; ARG-117; VAL-137 AND ARG-245</scope>
    <scope>FUNCTION</scope>
    <scope>CATALYTIC ACTIVITY</scope>
    <scope>ACTIVITY REGULATION</scope>
    <scope>BIOPHYSICOCHEMICAL PROPERTIES</scope>
    <scope>TISSUE SPECIFICITY</scope>
    <source>
        <tissue>Kidney</tissue>
    </source>
</reference>
<reference key="2">
    <citation type="submission" date="2005-04" db="EMBL/GenBank/DDBJ databases">
        <authorList>
            <person name="Suzuki Y."/>
            <person name="Sugano S."/>
            <person name="Totoki Y."/>
            <person name="Toyoda A."/>
            <person name="Takeda T."/>
            <person name="Sakaki Y."/>
            <person name="Tanaka A."/>
            <person name="Yokoyama S."/>
        </authorList>
    </citation>
    <scope>NUCLEOTIDE SEQUENCE [LARGE SCALE MRNA]</scope>
    <scope>VARIANT SER-424</scope>
    <source>
        <tissue>Kidney proximal tubule</tissue>
        <tissue>Pancreas</tissue>
    </source>
</reference>
<reference key="3">
    <citation type="journal article" date="1998" name="Am. J. Hum. Genet.">
        <title>Biochemical characterization of arylsulfatase E and functional analysis of mutations found in patients with X-linked chondrodysplasia punctata.</title>
        <authorList>
            <person name="Daniele A."/>
            <person name="Parenti G."/>
            <person name="D'Addio M."/>
            <person name="Andria G."/>
            <person name="Ballabio A."/>
            <person name="Meroni G."/>
        </authorList>
    </citation>
    <scope>CHARACTERIZATION OF VARIANTS CDPX1 SER-12; PRO-111; VAL-137; ARG-245 AND TYR-492</scope>
    <scope>FUNCTION</scope>
    <scope>CATALYTIC ACTIVITY</scope>
    <scope>SUBCELLULAR LOCATION</scope>
</reference>
<reference key="4">
    <citation type="journal article" date="2009" name="J. Proteome Res.">
        <title>Glycoproteomics analysis of human liver tissue by combination of multiple enzyme digestion and hydrazide chemistry.</title>
        <authorList>
            <person name="Chen R."/>
            <person name="Jiang X."/>
            <person name="Sun D."/>
            <person name="Han G."/>
            <person name="Wang F."/>
            <person name="Ye M."/>
            <person name="Wang L."/>
            <person name="Zou H."/>
        </authorList>
    </citation>
    <scope>GLYCOSYLATION [LARGE SCALE ANALYSIS] AT ASN-125</scope>
    <source>
        <tissue>Liver</tissue>
    </source>
</reference>
<reference key="5">
    <citation type="journal article" date="1997" name="Am. J. Med. Genet.">
        <title>X-linked recessive chondrodysplasia punctata due to a new point mutation of the ARSE gene.</title>
        <authorList>
            <person name="Parenti G."/>
            <person name="Buttitta P."/>
            <person name="Meroni G."/>
            <person name="Franco B."/>
            <person name="Bernard L."/>
            <person name="Rizzolo M.G."/>
            <person name="Brunetti-Pierri N."/>
            <person name="Ballabio A."/>
            <person name="Andria G."/>
        </authorList>
    </citation>
    <scope>VARIANT CDPX1 TYR-492</scope>
</reference>
<reference key="6">
    <citation type="journal article" date="2003" name="Am. J. Med. Genet. A">
        <title>X-linked recessive chondrodysplasia punctata: spectrum of arylsulfatase E gene mutations and expanded clinical variability.</title>
        <authorList>
            <person name="Brunetti-Pierri N."/>
            <person name="Andreucci M.V."/>
            <person name="Tuzzi R."/>
            <person name="Vega G.R."/>
            <person name="Gray G."/>
            <person name="McKeown C."/>
            <person name="Ballabio A."/>
            <person name="Andria G."/>
            <person name="Meroni G."/>
            <person name="Parenti G."/>
        </authorList>
    </citation>
    <scope>VARIANTS CDPX1 ASN-80; MET-481 AND SER-578</scope>
</reference>
<protein>
    <recommendedName>
        <fullName>Arylsulfatase L</fullName>
        <ecNumber evidence="5 7">3.1.6.1</ecNumber>
    </recommendedName>
    <alternativeName>
        <fullName>Arylsulfatase E</fullName>
        <shortName>ASE</shortName>
    </alternativeName>
</protein>
<feature type="signal peptide" evidence="2">
    <location>
        <begin position="1"/>
        <end position="31"/>
    </location>
</feature>
<feature type="chain" id="PRO_0000033425" description="Arylsulfatase L">
    <location>
        <begin position="32"/>
        <end position="589"/>
    </location>
</feature>
<feature type="active site" description="Nucleophile" evidence="1">
    <location>
        <position position="86"/>
    </location>
</feature>
<feature type="active site" evidence="1">
    <location>
        <position position="147"/>
    </location>
</feature>
<feature type="binding site" evidence="1">
    <location>
        <position position="46"/>
    </location>
    <ligand>
        <name>Ca(2+)</name>
        <dbReference type="ChEBI" id="CHEBI:29108"/>
    </ligand>
</feature>
<feature type="binding site" evidence="1">
    <location>
        <position position="47"/>
    </location>
    <ligand>
        <name>Ca(2+)</name>
        <dbReference type="ChEBI" id="CHEBI:29108"/>
    </ligand>
</feature>
<feature type="binding site" description="via 3-oxoalanine" evidence="1">
    <location>
        <position position="86"/>
    </location>
    <ligand>
        <name>Ca(2+)</name>
        <dbReference type="ChEBI" id="CHEBI:29108"/>
    </ligand>
</feature>
<feature type="binding site" evidence="1">
    <location>
        <position position="145"/>
    </location>
    <ligand>
        <name>substrate</name>
    </ligand>
</feature>
<feature type="binding site" evidence="1">
    <location>
        <position position="301"/>
    </location>
    <ligand>
        <name>substrate</name>
    </ligand>
</feature>
<feature type="binding site" evidence="1">
    <location>
        <position position="353"/>
    </location>
    <ligand>
        <name>Ca(2+)</name>
        <dbReference type="ChEBI" id="CHEBI:29108"/>
    </ligand>
</feature>
<feature type="binding site" evidence="1">
    <location>
        <position position="354"/>
    </location>
    <ligand>
        <name>Ca(2+)</name>
        <dbReference type="ChEBI" id="CHEBI:29108"/>
    </ligand>
</feature>
<feature type="binding site" evidence="1">
    <location>
        <position position="378"/>
    </location>
    <ligand>
        <name>substrate</name>
    </ligand>
</feature>
<feature type="modified residue" description="3-oxoalanine (Cys)" evidence="1">
    <location>
        <position position="86"/>
    </location>
</feature>
<feature type="glycosylation site" description="N-linked (GlcNAc...) asparagine" evidence="2">
    <location>
        <position position="58"/>
    </location>
</feature>
<feature type="glycosylation site" description="N-linked (GlcNAc...) asparagine" evidence="4">
    <location>
        <position position="125"/>
    </location>
</feature>
<feature type="glycosylation site" description="N-linked (GlcNAc...) asparagine" evidence="2">
    <location>
        <position position="258"/>
    </location>
</feature>
<feature type="glycosylation site" description="N-linked (GlcNAc...) asparagine" evidence="2">
    <location>
        <position position="344"/>
    </location>
</feature>
<feature type="sequence variant" id="VAR_007307" description="In CDPX1; no effect on arylsulfatase activity, protein stability and localization to the Golgi apparatus; dbSNP:rs122460151." evidence="5 7">
    <original>R</original>
    <variation>S</variation>
    <location>
        <position position="12"/>
    </location>
</feature>
<feature type="sequence variant" id="VAR_023570" description="In CDPX1." evidence="3">
    <original>I</original>
    <variation>N</variation>
    <location>
        <position position="80"/>
    </location>
</feature>
<feature type="sequence variant" id="VAR_007308" description="In CDPX1; significant loss of arylsulfatase activity; no effect on protein stability and localization to the Golgi apparatus; dbSNP:rs122460153." evidence="5 7">
    <original>R</original>
    <variation>P</variation>
    <location>
        <position position="111"/>
    </location>
</feature>
<feature type="sequence variant" id="VAR_007309" description="In CDPX1; dbSNP:rs122460152." evidence="5">
    <original>G</original>
    <variation>R</variation>
    <location>
        <position position="117"/>
    </location>
</feature>
<feature type="sequence variant" id="VAR_007310" description="In CDPX1; significant loss of arylsulfatase activity; no effect on protein stability and localization to the Golgi apparatus; dbSNP:rs80338711." evidence="5 7">
    <original>G</original>
    <variation>V</variation>
    <location>
        <position position="137"/>
    </location>
</feature>
<feature type="sequence variant" id="VAR_037974" description="In dbSNP:rs34412194.">
    <original>R</original>
    <variation>H</variation>
    <location>
        <position position="183"/>
    </location>
</feature>
<feature type="sequence variant" id="VAR_007311" description="In CDPX1; significant loss of arylsulfatase activity; no effect on protein stability and localization to the Golgi apparatus; dbSNP:rs122460154." evidence="5 7">
    <original>G</original>
    <variation>R</variation>
    <location>
        <position position="245"/>
    </location>
</feature>
<feature type="sequence variant" id="VAR_037975" description="In dbSNP:rs35143646." evidence="8">
    <original>G</original>
    <variation>S</variation>
    <location>
        <position position="424"/>
    </location>
</feature>
<feature type="sequence variant" id="VAR_023571" description="In CDPX1; dbSNP:rs80338713." evidence="3">
    <original>T</original>
    <variation>M</variation>
    <location>
        <position position="481"/>
    </location>
</feature>
<feature type="sequence variant" id="VAR_007312" description="In CDPX1; significant loss of arylsulfatase activity; no effect on protein stability and localization to the Golgi apparatus; dbSNP:rs122460155." evidence="6 7">
    <original>C</original>
    <variation>Y</variation>
    <location>
        <position position="492"/>
    </location>
</feature>
<feature type="sequence variant" id="VAR_023572" description="In CDPX1; dbSNP:rs28935474." evidence="3">
    <original>P</original>
    <variation>S</variation>
    <location>
        <position position="578"/>
    </location>
</feature>
<feature type="sequence conflict" description="In Ref. 1; CAA58556." evidence="9" ref="1">
    <original>D</original>
    <variation>E</variation>
    <location>
        <position position="168"/>
    </location>
</feature>
<evidence type="ECO:0000250" key="1">
    <source>
        <dbReference type="UniProtKB" id="P15289"/>
    </source>
</evidence>
<evidence type="ECO:0000255" key="2"/>
<evidence type="ECO:0000269" key="3">
    <source>
    </source>
</evidence>
<evidence type="ECO:0000269" key="4">
    <source>
    </source>
</evidence>
<evidence type="ECO:0000269" key="5">
    <source>
    </source>
</evidence>
<evidence type="ECO:0000269" key="6">
    <source>
    </source>
</evidence>
<evidence type="ECO:0000269" key="7">
    <source>
    </source>
</evidence>
<evidence type="ECO:0000269" key="8">
    <source ref="2"/>
</evidence>
<evidence type="ECO:0000305" key="9"/>
<evidence type="ECO:0000312" key="10">
    <source>
        <dbReference type="HGNC" id="HGNC:719"/>
    </source>
</evidence>
<dbReference type="EC" id="3.1.6.1" evidence="5 7"/>
<dbReference type="EMBL" id="X83573">
    <property type="protein sequence ID" value="CAA58556.1"/>
    <property type="molecule type" value="mRNA"/>
</dbReference>
<dbReference type="EMBL" id="AK223183">
    <property type="protein sequence ID" value="BAD96903.1"/>
    <property type="molecule type" value="mRNA"/>
</dbReference>
<dbReference type="EMBL" id="AK223199">
    <property type="protein sequence ID" value="BAD96919.1"/>
    <property type="molecule type" value="mRNA"/>
</dbReference>
<dbReference type="CCDS" id="CCDS14122.1"/>
<dbReference type="PIR" id="I37187">
    <property type="entry name" value="I37187"/>
</dbReference>
<dbReference type="RefSeq" id="NP_000038.2">
    <property type="nucleotide sequence ID" value="NM_000047.3"/>
</dbReference>
<dbReference type="RefSeq" id="XP_005274576.1">
    <property type="nucleotide sequence ID" value="XM_005274519.5"/>
</dbReference>
<dbReference type="SMR" id="P51690"/>
<dbReference type="BioGRID" id="106908">
    <property type="interactions" value="38"/>
</dbReference>
<dbReference type="FunCoup" id="P51690">
    <property type="interactions" value="28"/>
</dbReference>
<dbReference type="IntAct" id="P51690">
    <property type="interactions" value="27"/>
</dbReference>
<dbReference type="STRING" id="9606.ENSP00000500220"/>
<dbReference type="GlyCosmos" id="P51690">
    <property type="glycosylation" value="4 sites, No reported glycans"/>
</dbReference>
<dbReference type="GlyGen" id="P51690">
    <property type="glycosylation" value="4 sites, 1 N-linked glycan (1 site)"/>
</dbReference>
<dbReference type="iPTMnet" id="P51690"/>
<dbReference type="PhosphoSitePlus" id="P51690"/>
<dbReference type="SwissPalm" id="P51690"/>
<dbReference type="BioMuta" id="ARSE"/>
<dbReference type="DMDM" id="77416850"/>
<dbReference type="jPOST" id="P51690"/>
<dbReference type="MassIVE" id="P51690"/>
<dbReference type="PaxDb" id="9606-ENSP00000441417"/>
<dbReference type="PeptideAtlas" id="P51690"/>
<dbReference type="ProteomicsDB" id="56377"/>
<dbReference type="Antibodypedia" id="23506">
    <property type="antibodies" value="131 antibodies from 26 providers"/>
</dbReference>
<dbReference type="DNASU" id="415"/>
<dbReference type="Ensembl" id="ENST00000381134.9">
    <property type="protein sequence ID" value="ENSP00000370526.3"/>
    <property type="gene ID" value="ENSG00000157399.17"/>
</dbReference>
<dbReference type="Ensembl" id="ENST00000540563.6">
    <property type="protein sequence ID" value="ENSP00000438198.2"/>
    <property type="gene ID" value="ENSG00000157399.17"/>
</dbReference>
<dbReference type="GeneID" id="415"/>
<dbReference type="KEGG" id="hsa:415"/>
<dbReference type="MANE-Select" id="ENST00000381134.9">
    <property type="protein sequence ID" value="ENSP00000370526.3"/>
    <property type="RefSeq nucleotide sequence ID" value="NM_000047.3"/>
    <property type="RefSeq protein sequence ID" value="NP_000038.2"/>
</dbReference>
<dbReference type="UCSC" id="uc004crc.5">
    <property type="organism name" value="human"/>
</dbReference>
<dbReference type="AGR" id="HGNC:719"/>
<dbReference type="CTD" id="415"/>
<dbReference type="DisGeNET" id="415"/>
<dbReference type="GeneCards" id="ARSL"/>
<dbReference type="GeneReviews" id="ARSL"/>
<dbReference type="HGNC" id="HGNC:719">
    <property type="gene designation" value="ARSL"/>
</dbReference>
<dbReference type="HPA" id="ENSG00000157399">
    <property type="expression patterns" value="Tissue enhanced (kidney, liver, pancreas)"/>
</dbReference>
<dbReference type="MalaCards" id="ARSL"/>
<dbReference type="MIM" id="300180">
    <property type="type" value="gene"/>
</dbReference>
<dbReference type="MIM" id="302950">
    <property type="type" value="phenotype"/>
</dbReference>
<dbReference type="neXtProt" id="NX_P51690"/>
<dbReference type="OpenTargets" id="ENSG00000157399"/>
<dbReference type="Orphanet" id="79345">
    <property type="disease" value="Brachytelephalangic chondrodysplasia punctata"/>
</dbReference>
<dbReference type="PharmGKB" id="PA25010"/>
<dbReference type="VEuPathDB" id="HostDB:ENSG00000157399"/>
<dbReference type="eggNOG" id="KOG3867">
    <property type="taxonomic scope" value="Eukaryota"/>
</dbReference>
<dbReference type="GeneTree" id="ENSGT00940000163319"/>
<dbReference type="InParanoid" id="P51690"/>
<dbReference type="OMA" id="FSMMADC"/>
<dbReference type="OrthoDB" id="103349at2759"/>
<dbReference type="PAN-GO" id="P51690">
    <property type="GO annotations" value="1 GO annotation based on evolutionary models"/>
</dbReference>
<dbReference type="PhylomeDB" id="P51690"/>
<dbReference type="TreeFam" id="TF314186"/>
<dbReference type="PathwayCommons" id="P51690"/>
<dbReference type="Reactome" id="R-HSA-1663150">
    <property type="pathway name" value="The activation of arylsulfatases"/>
</dbReference>
<dbReference type="Reactome" id="R-HSA-9840310">
    <property type="pathway name" value="Glycosphingolipid catabolism"/>
</dbReference>
<dbReference type="SignaLink" id="P51690"/>
<dbReference type="BioGRID-ORCS" id="415">
    <property type="hits" value="10 hits in 772 CRISPR screens"/>
</dbReference>
<dbReference type="GeneWiki" id="Arylsulfatase_E"/>
<dbReference type="GenomeRNAi" id="415"/>
<dbReference type="Pharos" id="P51690">
    <property type="development level" value="Tbio"/>
</dbReference>
<dbReference type="PRO" id="PR:P51690"/>
<dbReference type="Proteomes" id="UP000005640">
    <property type="component" value="Chromosome X"/>
</dbReference>
<dbReference type="RNAct" id="P51690">
    <property type="molecule type" value="protein"/>
</dbReference>
<dbReference type="Bgee" id="ENSG00000157399">
    <property type="expression patterns" value="Expressed in body of pancreas and 107 other cell types or tissues"/>
</dbReference>
<dbReference type="ExpressionAtlas" id="P51690">
    <property type="expression patterns" value="baseline and differential"/>
</dbReference>
<dbReference type="GO" id="GO:0005788">
    <property type="term" value="C:endoplasmic reticulum lumen"/>
    <property type="evidence" value="ECO:0000304"/>
    <property type="project" value="Reactome"/>
</dbReference>
<dbReference type="GO" id="GO:0070062">
    <property type="term" value="C:extracellular exosome"/>
    <property type="evidence" value="ECO:0007005"/>
    <property type="project" value="UniProtKB"/>
</dbReference>
<dbReference type="GO" id="GO:0005794">
    <property type="term" value="C:Golgi apparatus"/>
    <property type="evidence" value="ECO:0000314"/>
    <property type="project" value="UniProtKB"/>
</dbReference>
<dbReference type="GO" id="GO:0005795">
    <property type="term" value="C:Golgi stack"/>
    <property type="evidence" value="ECO:0007669"/>
    <property type="project" value="UniProtKB-SubCell"/>
</dbReference>
<dbReference type="GO" id="GO:0004065">
    <property type="term" value="F:arylsulfatase activity"/>
    <property type="evidence" value="ECO:0000314"/>
    <property type="project" value="UniProtKB"/>
</dbReference>
<dbReference type="GO" id="GO:0046872">
    <property type="term" value="F:metal ion binding"/>
    <property type="evidence" value="ECO:0007669"/>
    <property type="project" value="UniProtKB-KW"/>
</dbReference>
<dbReference type="GO" id="GO:0001501">
    <property type="term" value="P:skeletal system development"/>
    <property type="evidence" value="ECO:0000304"/>
    <property type="project" value="ProtInc"/>
</dbReference>
<dbReference type="FunFam" id="1.10.287.550:FF:000001">
    <property type="entry name" value="Arylsulfatase E"/>
    <property type="match status" value="1"/>
</dbReference>
<dbReference type="FunFam" id="3.30.1120.10:FF:000001">
    <property type="entry name" value="Arylsulfatase E"/>
    <property type="match status" value="1"/>
</dbReference>
<dbReference type="FunFam" id="3.40.720.10:FF:000233">
    <property type="entry name" value="Predicted protein"/>
    <property type="match status" value="1"/>
</dbReference>
<dbReference type="Gene3D" id="3.30.1120.10">
    <property type="match status" value="1"/>
</dbReference>
<dbReference type="Gene3D" id="3.40.720.10">
    <property type="entry name" value="Alkaline Phosphatase, subunit A"/>
    <property type="match status" value="1"/>
</dbReference>
<dbReference type="Gene3D" id="1.10.287.550">
    <property type="entry name" value="Helix hairpin bin"/>
    <property type="match status" value="1"/>
</dbReference>
<dbReference type="InterPro" id="IPR017850">
    <property type="entry name" value="Alkaline_phosphatase_core_sf"/>
</dbReference>
<dbReference type="InterPro" id="IPR050738">
    <property type="entry name" value="Sulfatase"/>
</dbReference>
<dbReference type="InterPro" id="IPR024607">
    <property type="entry name" value="Sulfatase_CS"/>
</dbReference>
<dbReference type="InterPro" id="IPR000917">
    <property type="entry name" value="Sulfatase_N"/>
</dbReference>
<dbReference type="PANTHER" id="PTHR42693">
    <property type="entry name" value="ARYLSULFATASE FAMILY MEMBER"/>
    <property type="match status" value="1"/>
</dbReference>
<dbReference type="PANTHER" id="PTHR42693:SF48">
    <property type="entry name" value="ARYLSULFATASE L"/>
    <property type="match status" value="1"/>
</dbReference>
<dbReference type="Pfam" id="PF00884">
    <property type="entry name" value="Sulfatase"/>
    <property type="match status" value="1"/>
</dbReference>
<dbReference type="Pfam" id="PF14707">
    <property type="entry name" value="Sulfatase_C"/>
    <property type="match status" value="1"/>
</dbReference>
<dbReference type="SUPFAM" id="SSF53649">
    <property type="entry name" value="Alkaline phosphatase-like"/>
    <property type="match status" value="1"/>
</dbReference>
<dbReference type="PROSITE" id="PS00523">
    <property type="entry name" value="SULFATASE_1"/>
    <property type="match status" value="1"/>
</dbReference>
<dbReference type="PROSITE" id="PS00149">
    <property type="entry name" value="SULFATASE_2"/>
    <property type="match status" value="1"/>
</dbReference>
<proteinExistence type="evidence at protein level"/>